<feature type="chain" id="PRO_0000200024" description="Exodeoxyribonuclease III">
    <location>
        <begin position="1"/>
        <end position="268"/>
    </location>
</feature>
<feature type="active site" evidence="1">
    <location>
        <position position="109"/>
    </location>
</feature>
<feature type="active site" description="Proton donor/acceptor" evidence="1">
    <location>
        <position position="151"/>
    </location>
</feature>
<feature type="binding site" evidence="1">
    <location>
        <position position="34"/>
    </location>
    <ligand>
        <name>Mg(2+)</name>
        <dbReference type="ChEBI" id="CHEBI:18420"/>
        <label>1</label>
    </ligand>
</feature>
<feature type="binding site" evidence="1">
    <location>
        <position position="151"/>
    </location>
    <ligand>
        <name>Mg(2+)</name>
        <dbReference type="ChEBI" id="CHEBI:18420"/>
        <label>2</label>
    </ligand>
</feature>
<feature type="binding site" evidence="1">
    <location>
        <position position="153"/>
    </location>
    <ligand>
        <name>Mg(2+)</name>
        <dbReference type="ChEBI" id="CHEBI:18420"/>
        <label>2</label>
    </ligand>
</feature>
<feature type="binding site" evidence="1">
    <location>
        <position position="258"/>
    </location>
    <ligand>
        <name>Mg(2+)</name>
        <dbReference type="ChEBI" id="CHEBI:18420"/>
        <label>1</label>
    </ligand>
</feature>
<feature type="site" description="Transition state stabilizer" evidence="1">
    <location>
        <position position="153"/>
    </location>
</feature>
<feature type="site" description="Important for catalytic activity" evidence="1">
    <location>
        <position position="229"/>
    </location>
</feature>
<feature type="site" description="Interaction with DNA substrate" evidence="1">
    <location>
        <position position="259"/>
    </location>
</feature>
<sequence length="268" mass="30785">MKFVSFNINGLRARPHQLEAIVEKHQPDVIGLQETKVHDEMFPLEEVAKLGYNVFYHGQKGHYGVALLTKATPISVRRGFPDDGEEAQRRIIMAEIPSPLGNITVINGYFPQGESRDHPLKFPAKAQFYQNLQNYLETELKCDNPVLIMGDMNISPTDLDIGIGEENRKRWLRTGKCSFLPEEREWMSRLLKWGLVDTFRQANPQTMDKFSWFDYRSKGFVDNRGLRIDLLLASAPLAERCAETGIDYDIRSMEKPSDHAPVWATFRV</sequence>
<proteinExistence type="inferred from homology"/>
<evidence type="ECO:0000250" key="1"/>
<evidence type="ECO:0000305" key="2"/>
<protein>
    <recommendedName>
        <fullName>Exodeoxyribonuclease III</fullName>
        <shortName>EXO III</shortName>
        <shortName>Exonuclease III</shortName>
        <ecNumber>3.1.11.2</ecNumber>
    </recommendedName>
    <alternativeName>
        <fullName>AP endonuclease VI</fullName>
    </alternativeName>
</protein>
<comment type="function">
    <text evidence="1">Major apurinic-apyrimidinic endonuclease of E.coli. It removes the damaged DNA at cytosines and guanines by cleaving on the 3'-side of the AP site by a beta-elimination reaction. It exhibits 3'-5'-exonuclease, 3'-phosphomonoesterase, 3'-repair diesterase and ribonuclease H activities (By similarity).</text>
</comment>
<comment type="catalytic activity">
    <reaction>
        <text>Exonucleolytic cleavage in the 3'- to 5'-direction to yield nucleoside 5'-phosphates.</text>
        <dbReference type="EC" id="3.1.11.2"/>
    </reaction>
</comment>
<comment type="cofactor">
    <cofactor evidence="1">
        <name>Mg(2+)</name>
        <dbReference type="ChEBI" id="CHEBI:18420"/>
    </cofactor>
    <cofactor evidence="1">
        <name>Mn(2+)</name>
        <dbReference type="ChEBI" id="CHEBI:29035"/>
    </cofactor>
    <text evidence="1">Probably binds two magnesium or manganese ions per subunit.</text>
</comment>
<comment type="subunit">
    <text evidence="1">Monomer.</text>
</comment>
<comment type="similarity">
    <text evidence="2">Belongs to the DNA repair enzymes AP/ExoA family.</text>
</comment>
<gene>
    <name type="primary">xthA</name>
    <name type="ordered locus">STM1302</name>
</gene>
<organism>
    <name type="scientific">Salmonella typhimurium (strain LT2 / SGSC1412 / ATCC 700720)</name>
    <dbReference type="NCBI Taxonomy" id="99287"/>
    <lineage>
        <taxon>Bacteria</taxon>
        <taxon>Pseudomonadati</taxon>
        <taxon>Pseudomonadota</taxon>
        <taxon>Gammaproteobacteria</taxon>
        <taxon>Enterobacterales</taxon>
        <taxon>Enterobacteriaceae</taxon>
        <taxon>Salmonella</taxon>
    </lineage>
</organism>
<keyword id="KW-0227">DNA damage</keyword>
<keyword id="KW-0234">DNA repair</keyword>
<keyword id="KW-0269">Exonuclease</keyword>
<keyword id="KW-0378">Hydrolase</keyword>
<keyword id="KW-0460">Magnesium</keyword>
<keyword id="KW-0479">Metal-binding</keyword>
<keyword id="KW-0540">Nuclease</keyword>
<keyword id="KW-1185">Reference proteome</keyword>
<reference key="1">
    <citation type="journal article" date="1999" name="J. Bacteriol.">
        <title>Role of ArgR in activation of the ast operon, encoding enzymes of the arginine succinyltransferase pathway in Salmonella typhimurium.</title>
        <authorList>
            <person name="Lu C.-D."/>
            <person name="Abdelal A.T."/>
        </authorList>
    </citation>
    <scope>NUCLEOTIDE SEQUENCE [GENOMIC DNA]</scope>
    <source>
        <strain>LT2</strain>
    </source>
</reference>
<reference key="2">
    <citation type="journal article" date="2001" name="Nature">
        <title>Complete genome sequence of Salmonella enterica serovar Typhimurium LT2.</title>
        <authorList>
            <person name="McClelland M."/>
            <person name="Sanderson K.E."/>
            <person name="Spieth J."/>
            <person name="Clifton S.W."/>
            <person name="Latreille P."/>
            <person name="Courtney L."/>
            <person name="Porwollik S."/>
            <person name="Ali J."/>
            <person name="Dante M."/>
            <person name="Du F."/>
            <person name="Hou S."/>
            <person name="Layman D."/>
            <person name="Leonard S."/>
            <person name="Nguyen C."/>
            <person name="Scott K."/>
            <person name="Holmes A."/>
            <person name="Grewal N."/>
            <person name="Mulvaney E."/>
            <person name="Ryan E."/>
            <person name="Sun H."/>
            <person name="Florea L."/>
            <person name="Miller W."/>
            <person name="Stoneking T."/>
            <person name="Nhan M."/>
            <person name="Waterston R."/>
            <person name="Wilson R.K."/>
        </authorList>
    </citation>
    <scope>NUCLEOTIDE SEQUENCE [LARGE SCALE GENOMIC DNA]</scope>
    <source>
        <strain>LT2 / SGSC1412 / ATCC 700720</strain>
    </source>
</reference>
<name>EX3_SALTY</name>
<accession>P0A1A9</accession>
<accession>Q9Z612</accession>
<dbReference type="EC" id="3.1.11.2"/>
<dbReference type="EMBL" id="AF108767">
    <property type="protein sequence ID" value="AAD16979.1"/>
    <property type="molecule type" value="Genomic_DNA"/>
</dbReference>
<dbReference type="EMBL" id="AE006468">
    <property type="protein sequence ID" value="AAL20227.1"/>
    <property type="molecule type" value="Genomic_DNA"/>
</dbReference>
<dbReference type="RefSeq" id="NP_460268.1">
    <property type="nucleotide sequence ID" value="NC_003197.2"/>
</dbReference>
<dbReference type="RefSeq" id="WP_000673954.1">
    <property type="nucleotide sequence ID" value="NC_003197.2"/>
</dbReference>
<dbReference type="SMR" id="P0A1A9"/>
<dbReference type="STRING" id="99287.STM1302"/>
<dbReference type="PaxDb" id="99287-STM1302"/>
<dbReference type="GeneID" id="1252820"/>
<dbReference type="KEGG" id="stm:STM1302"/>
<dbReference type="PATRIC" id="fig|99287.12.peg.1383"/>
<dbReference type="HOGENOM" id="CLU_027539_0_3_6"/>
<dbReference type="OMA" id="WWSYRGR"/>
<dbReference type="PhylomeDB" id="P0A1A9"/>
<dbReference type="BioCyc" id="SENT99287:STM1302-MONOMER"/>
<dbReference type="Proteomes" id="UP000001014">
    <property type="component" value="Chromosome"/>
</dbReference>
<dbReference type="GO" id="GO:0003677">
    <property type="term" value="F:DNA binding"/>
    <property type="evidence" value="ECO:0007669"/>
    <property type="project" value="InterPro"/>
</dbReference>
<dbReference type="GO" id="GO:0008311">
    <property type="term" value="F:double-stranded DNA 3'-5' DNA exonuclease activity"/>
    <property type="evidence" value="ECO:0007669"/>
    <property type="project" value="UniProtKB-EC"/>
</dbReference>
<dbReference type="GO" id="GO:0004519">
    <property type="term" value="F:endonuclease activity"/>
    <property type="evidence" value="ECO:0007669"/>
    <property type="project" value="InterPro"/>
</dbReference>
<dbReference type="GO" id="GO:0046872">
    <property type="term" value="F:metal ion binding"/>
    <property type="evidence" value="ECO:0007669"/>
    <property type="project" value="UniProtKB-KW"/>
</dbReference>
<dbReference type="GO" id="GO:0006281">
    <property type="term" value="P:DNA repair"/>
    <property type="evidence" value="ECO:0007669"/>
    <property type="project" value="UniProtKB-KW"/>
</dbReference>
<dbReference type="CDD" id="cd09086">
    <property type="entry name" value="ExoIII-like_AP-endo"/>
    <property type="match status" value="1"/>
</dbReference>
<dbReference type="FunFam" id="3.60.10.10:FF:000006">
    <property type="entry name" value="Exodeoxyribonuclease III"/>
    <property type="match status" value="1"/>
</dbReference>
<dbReference type="Gene3D" id="3.60.10.10">
    <property type="entry name" value="Endonuclease/exonuclease/phosphatase"/>
    <property type="match status" value="1"/>
</dbReference>
<dbReference type="InterPro" id="IPR004808">
    <property type="entry name" value="AP_endonuc_1"/>
</dbReference>
<dbReference type="InterPro" id="IPR020847">
    <property type="entry name" value="AP_endonuclease_F1_BS"/>
</dbReference>
<dbReference type="InterPro" id="IPR020848">
    <property type="entry name" value="AP_endonuclease_F1_CS"/>
</dbReference>
<dbReference type="InterPro" id="IPR036691">
    <property type="entry name" value="Endo/exonu/phosph_ase_sf"/>
</dbReference>
<dbReference type="InterPro" id="IPR005135">
    <property type="entry name" value="Endo/exonuclease/phosphatase"/>
</dbReference>
<dbReference type="InterPro" id="IPR037493">
    <property type="entry name" value="ExoIII-like"/>
</dbReference>
<dbReference type="NCBIfam" id="TIGR00195">
    <property type="entry name" value="exoDNase_III"/>
    <property type="match status" value="1"/>
</dbReference>
<dbReference type="NCBIfam" id="NF008733">
    <property type="entry name" value="PRK11756.1"/>
    <property type="match status" value="1"/>
</dbReference>
<dbReference type="NCBIfam" id="TIGR00633">
    <property type="entry name" value="xth"/>
    <property type="match status" value="1"/>
</dbReference>
<dbReference type="PANTHER" id="PTHR43250">
    <property type="entry name" value="EXODEOXYRIBONUCLEASE III"/>
    <property type="match status" value="1"/>
</dbReference>
<dbReference type="PANTHER" id="PTHR43250:SF2">
    <property type="entry name" value="EXODEOXYRIBONUCLEASE III"/>
    <property type="match status" value="1"/>
</dbReference>
<dbReference type="Pfam" id="PF03372">
    <property type="entry name" value="Exo_endo_phos"/>
    <property type="match status" value="1"/>
</dbReference>
<dbReference type="SUPFAM" id="SSF56219">
    <property type="entry name" value="DNase I-like"/>
    <property type="match status" value="1"/>
</dbReference>
<dbReference type="PROSITE" id="PS00726">
    <property type="entry name" value="AP_NUCLEASE_F1_1"/>
    <property type="match status" value="1"/>
</dbReference>
<dbReference type="PROSITE" id="PS00727">
    <property type="entry name" value="AP_NUCLEASE_F1_2"/>
    <property type="match status" value="1"/>
</dbReference>
<dbReference type="PROSITE" id="PS00728">
    <property type="entry name" value="AP_NUCLEASE_F1_3"/>
    <property type="match status" value="1"/>
</dbReference>
<dbReference type="PROSITE" id="PS51435">
    <property type="entry name" value="AP_NUCLEASE_F1_4"/>
    <property type="match status" value="1"/>
</dbReference>